<comment type="subcellular location">
    <subcellularLocation>
        <location evidence="1">Cell inner membrane</location>
        <topology evidence="1">Multi-pass membrane protein</topology>
    </subcellularLocation>
</comment>
<sequence>MADFTLSKSLFSGKYRNASSTPGNIAYALFVLFCFWAGAQLLNLLVHAPGVYERLMQVQETGRPRVEIGLGVGTIFGLIPFLVGCLIFAVVALWLHWRHRRQ</sequence>
<keyword id="KW-0997">Cell inner membrane</keyword>
<keyword id="KW-1003">Cell membrane</keyword>
<keyword id="KW-0472">Membrane</keyword>
<keyword id="KW-1185">Reference proteome</keyword>
<keyword id="KW-0812">Transmembrane</keyword>
<keyword id="KW-1133">Transmembrane helix</keyword>
<reference key="1">
    <citation type="journal article" date="2001" name="Nature">
        <title>Genome sequence of enterohaemorrhagic Escherichia coli O157:H7.</title>
        <authorList>
            <person name="Perna N.T."/>
            <person name="Plunkett G. III"/>
            <person name="Burland V."/>
            <person name="Mau B."/>
            <person name="Glasner J.D."/>
            <person name="Rose D.J."/>
            <person name="Mayhew G.F."/>
            <person name="Evans P.S."/>
            <person name="Gregor J."/>
            <person name="Kirkpatrick H.A."/>
            <person name="Posfai G."/>
            <person name="Hackett J."/>
            <person name="Klink S."/>
            <person name="Boutin A."/>
            <person name="Shao Y."/>
            <person name="Miller L."/>
            <person name="Grotbeck E.J."/>
            <person name="Davis N.W."/>
            <person name="Lim A."/>
            <person name="Dimalanta E.T."/>
            <person name="Potamousis K."/>
            <person name="Apodaca J."/>
            <person name="Anantharaman T.S."/>
            <person name="Lin J."/>
            <person name="Yen G."/>
            <person name="Schwartz D.C."/>
            <person name="Welch R.A."/>
            <person name="Blattner F.R."/>
        </authorList>
    </citation>
    <scope>NUCLEOTIDE SEQUENCE [LARGE SCALE GENOMIC DNA]</scope>
    <source>
        <strain>O157:H7 / EDL933 / ATCC 700927 / EHEC</strain>
    </source>
</reference>
<reference key="2">
    <citation type="journal article" date="2001" name="DNA Res.">
        <title>Complete genome sequence of enterohemorrhagic Escherichia coli O157:H7 and genomic comparison with a laboratory strain K-12.</title>
        <authorList>
            <person name="Hayashi T."/>
            <person name="Makino K."/>
            <person name="Ohnishi M."/>
            <person name="Kurokawa K."/>
            <person name="Ishii K."/>
            <person name="Yokoyama K."/>
            <person name="Han C.-G."/>
            <person name="Ohtsubo E."/>
            <person name="Nakayama K."/>
            <person name="Murata T."/>
            <person name="Tanaka M."/>
            <person name="Tobe T."/>
            <person name="Iida T."/>
            <person name="Takami H."/>
            <person name="Honda T."/>
            <person name="Sasakawa C."/>
            <person name="Ogasawara N."/>
            <person name="Yasunaga T."/>
            <person name="Kuhara S."/>
            <person name="Shiba T."/>
            <person name="Hattori M."/>
            <person name="Shinagawa H."/>
        </authorList>
    </citation>
    <scope>NUCLEOTIDE SEQUENCE [LARGE SCALE GENOMIC DNA]</scope>
    <source>
        <strain>O157:H7 / Sakai / RIMD 0509952 / EHEC</strain>
    </source>
</reference>
<organism>
    <name type="scientific">Escherichia coli O157:H7</name>
    <dbReference type="NCBI Taxonomy" id="83334"/>
    <lineage>
        <taxon>Bacteria</taxon>
        <taxon>Pseudomonadati</taxon>
        <taxon>Pseudomonadota</taxon>
        <taxon>Gammaproteobacteria</taxon>
        <taxon>Enterobacterales</taxon>
        <taxon>Enterobacteriaceae</taxon>
        <taxon>Escherichia</taxon>
    </lineage>
</organism>
<name>YAIY_ECO57</name>
<protein>
    <recommendedName>
        <fullName>Inner membrane protein YaiY</fullName>
    </recommendedName>
</protein>
<feature type="chain" id="PRO_0000168600" description="Inner membrane protein YaiY">
    <location>
        <begin position="1"/>
        <end position="102"/>
    </location>
</feature>
<feature type="topological domain" description="Cytoplasmic" evidence="2">
    <location>
        <begin position="1"/>
        <end position="24"/>
    </location>
</feature>
<feature type="transmembrane region" description="Helical" evidence="2">
    <location>
        <begin position="25"/>
        <end position="45"/>
    </location>
</feature>
<feature type="topological domain" description="Periplasmic" evidence="2">
    <location>
        <begin position="46"/>
        <end position="74"/>
    </location>
</feature>
<feature type="transmembrane region" description="Helical" evidence="2">
    <location>
        <begin position="75"/>
        <end position="95"/>
    </location>
</feature>
<feature type="topological domain" description="Cytoplasmic" evidence="2">
    <location>
        <begin position="96"/>
        <end position="102"/>
    </location>
</feature>
<proteinExistence type="inferred from homology"/>
<dbReference type="EMBL" id="AE005174">
    <property type="protein sequence ID" value="AAG54725.1"/>
    <property type="molecule type" value="Genomic_DNA"/>
</dbReference>
<dbReference type="EMBL" id="BA000007">
    <property type="protein sequence ID" value="BAB33852.1"/>
    <property type="molecule type" value="Genomic_DNA"/>
</dbReference>
<dbReference type="PIR" id="A85533">
    <property type="entry name" value="A85533"/>
</dbReference>
<dbReference type="PIR" id="E90682">
    <property type="entry name" value="E90682"/>
</dbReference>
<dbReference type="RefSeq" id="NP_308456.1">
    <property type="nucleotide sequence ID" value="NC_002695.1"/>
</dbReference>
<dbReference type="RefSeq" id="WP_000763151.1">
    <property type="nucleotide sequence ID" value="NZ_VOAI01000005.1"/>
</dbReference>
<dbReference type="GeneID" id="914531"/>
<dbReference type="KEGG" id="ece:Z0475"/>
<dbReference type="KEGG" id="ecs:ECs_0429"/>
<dbReference type="PATRIC" id="fig|386585.9.peg.524"/>
<dbReference type="eggNOG" id="ENOG5032S6F">
    <property type="taxonomic scope" value="Bacteria"/>
</dbReference>
<dbReference type="HOGENOM" id="CLU_180695_0_0_6"/>
<dbReference type="OMA" id="FWAGAQI"/>
<dbReference type="Proteomes" id="UP000000558">
    <property type="component" value="Chromosome"/>
</dbReference>
<dbReference type="Proteomes" id="UP000002519">
    <property type="component" value="Chromosome"/>
</dbReference>
<dbReference type="GO" id="GO:0005886">
    <property type="term" value="C:plasma membrane"/>
    <property type="evidence" value="ECO:0007669"/>
    <property type="project" value="UniProtKB-SubCell"/>
</dbReference>
<dbReference type="InterPro" id="IPR020513">
    <property type="entry name" value="Uncharacterised_IM_YaiY"/>
</dbReference>
<dbReference type="Pfam" id="PF10954">
    <property type="entry name" value="DUF2755"/>
    <property type="match status" value="1"/>
</dbReference>
<accession>P0AAP9</accession>
<accession>P77669</accession>
<evidence type="ECO:0000250" key="1"/>
<evidence type="ECO:0000255" key="2"/>
<gene>
    <name type="primary">yaiY</name>
    <name type="ordered locus">Z0475</name>
    <name type="ordered locus">ECs0429</name>
</gene>